<sequence length="284" mass="31446">MHAKMNGWAGVRLVTHCLNTRSRTYVALNMLAFARTPRGVPSCLFNKVWVSRYALVLILMVCASESSTSWAVTSNRLPNCSTITTTAGQDAELHGPAPLSCNVTQWGRYENGSTPVLWCTLWGSRTRVSLGHRVAFGCSWKTFFIYNVSESSGGTYYQKGYNCTDKHITLSCFNLTVVPRAVQSTTTVMTPTVVTNSTFSVSLVASRLTTNSSAFRHASYQRQQRVGNGTLSKNITNLAFTYGSWGVAMLLFAAVMVLVDLGLPQSAWRRWRSHVDDEERGLLM</sequence>
<gene>
    <name type="primary">UL6</name>
</gene>
<name>UL06_HCMVA</name>
<keyword id="KW-0325">Glycoprotein</keyword>
<keyword id="KW-0472">Membrane</keyword>
<keyword id="KW-1185">Reference proteome</keyword>
<keyword id="KW-0812">Transmembrane</keyword>
<keyword id="KW-1133">Transmembrane helix</keyword>
<reference key="1">
    <citation type="journal article" date="1990" name="Curr. Top. Microbiol. Immunol.">
        <title>Analysis of the protein-coding content of the sequence of human cytomegalovirus strain AD169.</title>
        <authorList>
            <person name="Chee M.S."/>
            <person name="Bankier A.T."/>
            <person name="Beck S."/>
            <person name="Bohni R."/>
            <person name="Brown C.M."/>
            <person name="Cerny R."/>
            <person name="Horsnell T."/>
            <person name="Hutchison C.A. III"/>
            <person name="Kouzarides T."/>
            <person name="Martignetti J.A."/>
            <person name="Preddie E."/>
            <person name="Satchwell S.C."/>
            <person name="Tomlinson P."/>
            <person name="Weston K.M."/>
            <person name="Barrell B.G."/>
        </authorList>
    </citation>
    <scope>NUCLEOTIDE SEQUENCE [LARGE SCALE GENOMIC DNA]</scope>
</reference>
<reference key="2">
    <citation type="journal article" date="2003" name="J. Gen. Virol.">
        <title>The human cytomegalovirus genome revisited: comparison with the chimpanzee cytomegalovirus genome.</title>
        <authorList>
            <person name="Davison A.J."/>
            <person name="Dolan A."/>
            <person name="Akter P."/>
            <person name="Addison C."/>
            <person name="Dargan D.J."/>
            <person name="Alcendor D.J."/>
            <person name="McGeoch D.J."/>
            <person name="Hayward G.S."/>
        </authorList>
    </citation>
    <scope>GENOME REANNOTATION</scope>
</reference>
<reference key="3">
    <citation type="journal article" date="2003" name="J. Gen. Virol.">
        <authorList>
            <person name="Davison A.J."/>
            <person name="Dolan A."/>
            <person name="Akter P."/>
            <person name="Addison C."/>
            <person name="Dargan D.J."/>
            <person name="Alcendor D.J."/>
            <person name="McGeoch D.J."/>
            <person name="Hayward G.S."/>
        </authorList>
    </citation>
    <scope>ERRATUM OF PUBMED:12533697</scope>
</reference>
<protein>
    <recommendedName>
        <fullName>Uncharacterized protein UL6</fullName>
    </recommendedName>
</protein>
<organism>
    <name type="scientific">Human cytomegalovirus (strain AD169)</name>
    <name type="common">HHV-5</name>
    <name type="synonym">Human herpesvirus 5</name>
    <dbReference type="NCBI Taxonomy" id="10360"/>
    <lineage>
        <taxon>Viruses</taxon>
        <taxon>Duplodnaviria</taxon>
        <taxon>Heunggongvirae</taxon>
        <taxon>Peploviricota</taxon>
        <taxon>Herviviricetes</taxon>
        <taxon>Herpesvirales</taxon>
        <taxon>Orthoherpesviridae</taxon>
        <taxon>Betaherpesvirinae</taxon>
        <taxon>Cytomegalovirus</taxon>
        <taxon>Cytomegalovirus humanbeta5</taxon>
        <taxon>Human cytomegalovirus</taxon>
    </lineage>
</organism>
<dbReference type="EMBL" id="X17403">
    <property type="protein sequence ID" value="CAA35439.1"/>
    <property type="molecule type" value="Genomic_DNA"/>
</dbReference>
<dbReference type="EMBL" id="BK000394">
    <property type="protein sequence ID" value="DAA00163.1"/>
    <property type="molecule type" value="Genomic_DNA"/>
</dbReference>
<dbReference type="PIR" id="S09769">
    <property type="entry name" value="S09769"/>
</dbReference>
<dbReference type="SMR" id="P16720"/>
<dbReference type="GlyCosmos" id="P16720">
    <property type="glycosylation" value="10 sites, No reported glycans"/>
</dbReference>
<dbReference type="Proteomes" id="UP000008991">
    <property type="component" value="Segment"/>
</dbReference>
<dbReference type="Proteomes" id="UP000008992">
    <property type="component" value="Segment"/>
</dbReference>
<dbReference type="GO" id="GO:0016020">
    <property type="term" value="C:membrane"/>
    <property type="evidence" value="ECO:0007669"/>
    <property type="project" value="UniProtKB-SubCell"/>
</dbReference>
<comment type="subcellular location">
    <subcellularLocation>
        <location evidence="2">Membrane</location>
        <topology evidence="2">Single-pass membrane protein</topology>
    </subcellularLocation>
</comment>
<comment type="similarity">
    <text evidence="2">Belongs to the RL11 family.</text>
</comment>
<proteinExistence type="inferred from homology"/>
<organismHost>
    <name type="scientific">Homo sapiens</name>
    <name type="common">Human</name>
    <dbReference type="NCBI Taxonomy" id="9606"/>
</organismHost>
<evidence type="ECO:0000255" key="1"/>
<evidence type="ECO:0000305" key="2"/>
<feature type="chain" id="PRO_0000115303" description="Uncharacterized protein UL6">
    <location>
        <begin position="1"/>
        <end position="284"/>
    </location>
</feature>
<feature type="transmembrane region" description="Helical" evidence="1">
    <location>
        <begin position="239"/>
        <end position="259"/>
    </location>
</feature>
<feature type="glycosylation site" description="N-linked (GlcNAc...) asparagine; by host" evidence="1">
    <location>
        <position position="79"/>
    </location>
</feature>
<feature type="glycosylation site" description="N-linked (GlcNAc...) asparagine; by host" evidence="1">
    <location>
        <position position="102"/>
    </location>
</feature>
<feature type="glycosylation site" description="N-linked (GlcNAc...) asparagine; by host" evidence="1">
    <location>
        <position position="111"/>
    </location>
</feature>
<feature type="glycosylation site" description="N-linked (GlcNAc...) asparagine; by host" evidence="1">
    <location>
        <position position="147"/>
    </location>
</feature>
<feature type="glycosylation site" description="N-linked (GlcNAc...) asparagine; by host" evidence="1">
    <location>
        <position position="162"/>
    </location>
</feature>
<feature type="glycosylation site" description="N-linked (GlcNAc...) asparagine; by host" evidence="1">
    <location>
        <position position="174"/>
    </location>
</feature>
<feature type="glycosylation site" description="N-linked (GlcNAc...) asparagine; by host" evidence="1">
    <location>
        <position position="196"/>
    </location>
</feature>
<feature type="glycosylation site" description="N-linked (GlcNAc...) asparagine; by host" evidence="1">
    <location>
        <position position="211"/>
    </location>
</feature>
<feature type="glycosylation site" description="N-linked (GlcNAc...) asparagine; by host" evidence="1">
    <location>
        <position position="228"/>
    </location>
</feature>
<feature type="glycosylation site" description="N-linked (GlcNAc...) asparagine; by host" evidence="1">
    <location>
        <position position="234"/>
    </location>
</feature>
<accession>P16720</accession>
<accession>Q7M6M5</accession>